<gene>
    <name evidence="1" type="primary">prfA</name>
    <name type="ordered locus">Bfl348</name>
</gene>
<dbReference type="EMBL" id="BX248583">
    <property type="protein sequence ID" value="CAD83415.1"/>
    <property type="molecule type" value="Genomic_DNA"/>
</dbReference>
<dbReference type="SMR" id="Q7VR74"/>
<dbReference type="STRING" id="203907.Bfl348"/>
<dbReference type="KEGG" id="bfl:Bfl348"/>
<dbReference type="eggNOG" id="COG0216">
    <property type="taxonomic scope" value="Bacteria"/>
</dbReference>
<dbReference type="HOGENOM" id="CLU_036856_0_1_6"/>
<dbReference type="OrthoDB" id="9806673at2"/>
<dbReference type="Proteomes" id="UP000002192">
    <property type="component" value="Chromosome"/>
</dbReference>
<dbReference type="GO" id="GO:0005737">
    <property type="term" value="C:cytoplasm"/>
    <property type="evidence" value="ECO:0007669"/>
    <property type="project" value="UniProtKB-SubCell"/>
</dbReference>
<dbReference type="GO" id="GO:0016149">
    <property type="term" value="F:translation release factor activity, codon specific"/>
    <property type="evidence" value="ECO:0007669"/>
    <property type="project" value="UniProtKB-UniRule"/>
</dbReference>
<dbReference type="FunFam" id="3.30.160.20:FF:000004">
    <property type="entry name" value="Peptide chain release factor 1"/>
    <property type="match status" value="1"/>
</dbReference>
<dbReference type="FunFam" id="3.30.70.1660:FF:000002">
    <property type="entry name" value="Peptide chain release factor 1"/>
    <property type="match status" value="1"/>
</dbReference>
<dbReference type="FunFam" id="3.30.70.1660:FF:000004">
    <property type="entry name" value="Peptide chain release factor 1"/>
    <property type="match status" value="1"/>
</dbReference>
<dbReference type="Gene3D" id="3.30.160.20">
    <property type="match status" value="1"/>
</dbReference>
<dbReference type="Gene3D" id="3.30.70.1660">
    <property type="match status" value="1"/>
</dbReference>
<dbReference type="Gene3D" id="6.10.140.1950">
    <property type="match status" value="1"/>
</dbReference>
<dbReference type="HAMAP" id="MF_00093">
    <property type="entry name" value="Rel_fac_1"/>
    <property type="match status" value="1"/>
</dbReference>
<dbReference type="InterPro" id="IPR005139">
    <property type="entry name" value="PCRF"/>
</dbReference>
<dbReference type="InterPro" id="IPR000352">
    <property type="entry name" value="Pep_chain_release_fac_I"/>
</dbReference>
<dbReference type="InterPro" id="IPR045853">
    <property type="entry name" value="Pep_chain_release_fac_I_sf"/>
</dbReference>
<dbReference type="InterPro" id="IPR050057">
    <property type="entry name" value="Prokaryotic/Mito_RF"/>
</dbReference>
<dbReference type="InterPro" id="IPR004373">
    <property type="entry name" value="RF-1"/>
</dbReference>
<dbReference type="NCBIfam" id="TIGR00019">
    <property type="entry name" value="prfA"/>
    <property type="match status" value="1"/>
</dbReference>
<dbReference type="NCBIfam" id="NF001859">
    <property type="entry name" value="PRK00591.1"/>
    <property type="match status" value="1"/>
</dbReference>
<dbReference type="PANTHER" id="PTHR43804">
    <property type="entry name" value="LD18447P"/>
    <property type="match status" value="1"/>
</dbReference>
<dbReference type="PANTHER" id="PTHR43804:SF7">
    <property type="entry name" value="LD18447P"/>
    <property type="match status" value="1"/>
</dbReference>
<dbReference type="Pfam" id="PF03462">
    <property type="entry name" value="PCRF"/>
    <property type="match status" value="1"/>
</dbReference>
<dbReference type="Pfam" id="PF00472">
    <property type="entry name" value="RF-1"/>
    <property type="match status" value="1"/>
</dbReference>
<dbReference type="SMART" id="SM00937">
    <property type="entry name" value="PCRF"/>
    <property type="match status" value="1"/>
</dbReference>
<dbReference type="SUPFAM" id="SSF75620">
    <property type="entry name" value="Release factor"/>
    <property type="match status" value="1"/>
</dbReference>
<dbReference type="PROSITE" id="PS00745">
    <property type="entry name" value="RF_PROK_I"/>
    <property type="match status" value="1"/>
</dbReference>
<proteinExistence type="inferred from homology"/>
<evidence type="ECO:0000255" key="1">
    <source>
        <dbReference type="HAMAP-Rule" id="MF_00093"/>
    </source>
</evidence>
<protein>
    <recommendedName>
        <fullName evidence="1">Peptide chain release factor 1</fullName>
        <shortName evidence="1">RF-1</shortName>
    </recommendedName>
</protein>
<feature type="chain" id="PRO_0000263238" description="Peptide chain release factor 1">
    <location>
        <begin position="1"/>
        <end position="358"/>
    </location>
</feature>
<feature type="modified residue" description="N5-methylglutamine" evidence="1">
    <location>
        <position position="233"/>
    </location>
</feature>
<reference key="1">
    <citation type="journal article" date="2003" name="Proc. Natl. Acad. Sci. U.S.A.">
        <title>The genome sequence of Blochmannia floridanus: comparative analysis of reduced genomes.</title>
        <authorList>
            <person name="Gil R."/>
            <person name="Silva F.J."/>
            <person name="Zientz E."/>
            <person name="Delmotte F."/>
            <person name="Gonzalez-Candelas F."/>
            <person name="Latorre A."/>
            <person name="Rausell C."/>
            <person name="Kamerbeek J."/>
            <person name="Gadau J."/>
            <person name="Hoelldobler B."/>
            <person name="van Ham R.C.H.J."/>
            <person name="Gross R."/>
            <person name="Moya A."/>
        </authorList>
    </citation>
    <scope>NUCLEOTIDE SEQUENCE [LARGE SCALE GENOMIC DNA]</scope>
</reference>
<organism>
    <name type="scientific">Blochmanniella floridana</name>
    <dbReference type="NCBI Taxonomy" id="203907"/>
    <lineage>
        <taxon>Bacteria</taxon>
        <taxon>Pseudomonadati</taxon>
        <taxon>Pseudomonadota</taxon>
        <taxon>Gammaproteobacteria</taxon>
        <taxon>Enterobacterales</taxon>
        <taxon>Enterobacteriaceae</taxon>
        <taxon>ant endosymbionts</taxon>
        <taxon>Candidatus Blochmanniella</taxon>
    </lineage>
</organism>
<comment type="function">
    <text evidence="1">Peptide chain release factor 1 directs the termination of translation in response to the peptide chain termination codons UAG and UAA.</text>
</comment>
<comment type="subcellular location">
    <subcellularLocation>
        <location evidence="1">Cytoplasm</location>
    </subcellularLocation>
</comment>
<comment type="PTM">
    <text evidence="1">Methylated by PrmC. Methylation increases the termination efficiency of RF1.</text>
</comment>
<comment type="similarity">
    <text evidence="1">Belongs to the prokaryotic/mitochondrial release factor family.</text>
</comment>
<sequence>MHTILINKLMSLKQRFYKLEKSLNNFNTINNKEFYSLSKEHTYLHEIIKYFEEWLNIQKNIVHTKDMLSDIDMHDIVQDELKILNTSKHNLENKIKILLFSDPQDQYNCFIELRAGTGGKEAAIFAGELFRMYSRYIEMQRWNMEIIHATYGECGGYKEIIIKVPVHGSYGQLKFESGGHRVQRIPNTESQGRIHTSTCTIAVIPNIPNAILPEINSNDLRIDTFRSSGAGGQHVNTTDSAIRITHIPSGLSVECQDERSQHKNKSKALSVLKSRLYAINIKQKQQEESNVRRNLIGTGDRSDRIRTYNFQQGRVTDHRIAFTSYKLHDIMNGKLDILIQPIMCKHQATLLDQLTREK</sequence>
<accession>Q7VR74</accession>
<keyword id="KW-0963">Cytoplasm</keyword>
<keyword id="KW-0488">Methylation</keyword>
<keyword id="KW-0648">Protein biosynthesis</keyword>
<keyword id="KW-1185">Reference proteome</keyword>
<name>RF1_BLOFL</name>